<accession>B0UL53</accession>
<name>RIMP_METS4</name>
<keyword id="KW-0963">Cytoplasm</keyword>
<keyword id="KW-0690">Ribosome biogenesis</keyword>
<dbReference type="EMBL" id="CP000943">
    <property type="protein sequence ID" value="ACA17053.1"/>
    <property type="molecule type" value="Genomic_DNA"/>
</dbReference>
<dbReference type="RefSeq" id="WP_012332459.1">
    <property type="nucleotide sequence ID" value="NC_010511.1"/>
</dbReference>
<dbReference type="SMR" id="B0UL53"/>
<dbReference type="STRING" id="426117.M446_2614"/>
<dbReference type="KEGG" id="met:M446_2614"/>
<dbReference type="eggNOG" id="COG0779">
    <property type="taxonomic scope" value="Bacteria"/>
</dbReference>
<dbReference type="HOGENOM" id="CLU_070525_0_1_5"/>
<dbReference type="GO" id="GO:0005829">
    <property type="term" value="C:cytosol"/>
    <property type="evidence" value="ECO:0007669"/>
    <property type="project" value="TreeGrafter"/>
</dbReference>
<dbReference type="GO" id="GO:0000028">
    <property type="term" value="P:ribosomal small subunit assembly"/>
    <property type="evidence" value="ECO:0007669"/>
    <property type="project" value="TreeGrafter"/>
</dbReference>
<dbReference type="GO" id="GO:0006412">
    <property type="term" value="P:translation"/>
    <property type="evidence" value="ECO:0007669"/>
    <property type="project" value="TreeGrafter"/>
</dbReference>
<dbReference type="CDD" id="cd01734">
    <property type="entry name" value="YlxS_C"/>
    <property type="match status" value="1"/>
</dbReference>
<dbReference type="Gene3D" id="3.30.300.70">
    <property type="entry name" value="RimP-like superfamily, N-terminal"/>
    <property type="match status" value="1"/>
</dbReference>
<dbReference type="HAMAP" id="MF_01077">
    <property type="entry name" value="RimP"/>
    <property type="match status" value="1"/>
</dbReference>
<dbReference type="InterPro" id="IPR003728">
    <property type="entry name" value="Ribosome_maturation_RimP"/>
</dbReference>
<dbReference type="InterPro" id="IPR028998">
    <property type="entry name" value="RimP_C"/>
</dbReference>
<dbReference type="InterPro" id="IPR036847">
    <property type="entry name" value="RimP_C_sf"/>
</dbReference>
<dbReference type="InterPro" id="IPR028989">
    <property type="entry name" value="RimP_N"/>
</dbReference>
<dbReference type="InterPro" id="IPR035956">
    <property type="entry name" value="RimP_N_sf"/>
</dbReference>
<dbReference type="NCBIfam" id="NF000932">
    <property type="entry name" value="PRK00092.2-5"/>
    <property type="match status" value="1"/>
</dbReference>
<dbReference type="PANTHER" id="PTHR33867">
    <property type="entry name" value="RIBOSOME MATURATION FACTOR RIMP"/>
    <property type="match status" value="1"/>
</dbReference>
<dbReference type="PANTHER" id="PTHR33867:SF1">
    <property type="entry name" value="RIBOSOME MATURATION FACTOR RIMP"/>
    <property type="match status" value="1"/>
</dbReference>
<dbReference type="Pfam" id="PF17384">
    <property type="entry name" value="DUF150_C"/>
    <property type="match status" value="1"/>
</dbReference>
<dbReference type="Pfam" id="PF02576">
    <property type="entry name" value="RimP_N"/>
    <property type="match status" value="1"/>
</dbReference>
<dbReference type="SUPFAM" id="SSF74942">
    <property type="entry name" value="YhbC-like, C-terminal domain"/>
    <property type="match status" value="1"/>
</dbReference>
<dbReference type="SUPFAM" id="SSF75420">
    <property type="entry name" value="YhbC-like, N-terminal domain"/>
    <property type="match status" value="1"/>
</dbReference>
<sequence length="201" mass="21758">MTDAPDHHATEKRLITETGVAARVAQIVEPSLEGLGFRLVRVRVTGQNGCTVQIMAERPDGTMTVEDCEAVSRTISPLLDVDDPIGRAYHLEISSPGIDRPLVRAGDFARWAGHEAKVELAVPLEGRKRFRGLIRAPEGATVRIDLPDAKEGTPASYELRLADIGEAHLVLTDDLIRESLRRGSAPAQDEEGEDEAPGAPL</sequence>
<organism>
    <name type="scientific">Methylobacterium sp. (strain 4-46)</name>
    <dbReference type="NCBI Taxonomy" id="426117"/>
    <lineage>
        <taxon>Bacteria</taxon>
        <taxon>Pseudomonadati</taxon>
        <taxon>Pseudomonadota</taxon>
        <taxon>Alphaproteobacteria</taxon>
        <taxon>Hyphomicrobiales</taxon>
        <taxon>Methylobacteriaceae</taxon>
        <taxon>Methylobacterium</taxon>
    </lineage>
</organism>
<proteinExistence type="inferred from homology"/>
<evidence type="ECO:0000255" key="1">
    <source>
        <dbReference type="HAMAP-Rule" id="MF_01077"/>
    </source>
</evidence>
<evidence type="ECO:0000256" key="2">
    <source>
        <dbReference type="SAM" id="MobiDB-lite"/>
    </source>
</evidence>
<comment type="function">
    <text evidence="1">Required for maturation of 30S ribosomal subunits.</text>
</comment>
<comment type="subcellular location">
    <subcellularLocation>
        <location evidence="1">Cytoplasm</location>
    </subcellularLocation>
</comment>
<comment type="similarity">
    <text evidence="1">Belongs to the RimP family.</text>
</comment>
<feature type="chain" id="PRO_0000384706" description="Ribosome maturation factor RimP">
    <location>
        <begin position="1"/>
        <end position="201"/>
    </location>
</feature>
<feature type="region of interest" description="Disordered" evidence="2">
    <location>
        <begin position="180"/>
        <end position="201"/>
    </location>
</feature>
<feature type="compositionally biased region" description="Acidic residues" evidence="2">
    <location>
        <begin position="188"/>
        <end position="201"/>
    </location>
</feature>
<reference key="1">
    <citation type="submission" date="2008-02" db="EMBL/GenBank/DDBJ databases">
        <title>Complete sequence of chromosome of Methylobacterium sp. 4-46.</title>
        <authorList>
            <consortium name="US DOE Joint Genome Institute"/>
            <person name="Copeland A."/>
            <person name="Lucas S."/>
            <person name="Lapidus A."/>
            <person name="Glavina del Rio T."/>
            <person name="Dalin E."/>
            <person name="Tice H."/>
            <person name="Bruce D."/>
            <person name="Goodwin L."/>
            <person name="Pitluck S."/>
            <person name="Chertkov O."/>
            <person name="Brettin T."/>
            <person name="Detter J.C."/>
            <person name="Han C."/>
            <person name="Kuske C.R."/>
            <person name="Schmutz J."/>
            <person name="Larimer F."/>
            <person name="Land M."/>
            <person name="Hauser L."/>
            <person name="Kyrpides N."/>
            <person name="Ivanova N."/>
            <person name="Marx C.J."/>
            <person name="Richardson P."/>
        </authorList>
    </citation>
    <scope>NUCLEOTIDE SEQUENCE [LARGE SCALE GENOMIC DNA]</scope>
    <source>
        <strain>4-46</strain>
    </source>
</reference>
<protein>
    <recommendedName>
        <fullName evidence="1">Ribosome maturation factor RimP</fullName>
    </recommendedName>
</protein>
<gene>
    <name evidence="1" type="primary">rimP</name>
    <name type="ordered locus">M446_2614</name>
</gene>